<proteinExistence type="inferred from homology"/>
<organism>
    <name type="scientific">Shewanella sp. (strain ANA-3)</name>
    <dbReference type="NCBI Taxonomy" id="94122"/>
    <lineage>
        <taxon>Bacteria</taxon>
        <taxon>Pseudomonadati</taxon>
        <taxon>Pseudomonadota</taxon>
        <taxon>Gammaproteobacteria</taxon>
        <taxon>Alteromonadales</taxon>
        <taxon>Shewanellaceae</taxon>
        <taxon>Shewanella</taxon>
    </lineage>
</organism>
<protein>
    <recommendedName>
        <fullName evidence="1">Ubiquinone biosynthesis O-methyltransferase</fullName>
    </recommendedName>
    <alternativeName>
        <fullName evidence="1">2-polyprenyl-6-hydroxyphenol methylase</fullName>
        <ecNumber evidence="1">2.1.1.222</ecNumber>
    </alternativeName>
    <alternativeName>
        <fullName evidence="1">3-demethylubiquinone 3-O-methyltransferase</fullName>
        <ecNumber evidence="1">2.1.1.64</ecNumber>
    </alternativeName>
</protein>
<gene>
    <name evidence="1" type="primary">ubiG</name>
    <name type="ordered locus">Shewana3_1971</name>
</gene>
<accession>A0KWN3</accession>
<comment type="function">
    <text evidence="1">O-methyltransferase that catalyzes the 2 O-methylation steps in the ubiquinone biosynthetic pathway.</text>
</comment>
<comment type="catalytic activity">
    <reaction evidence="1">
        <text>a 3-demethylubiquinol + S-adenosyl-L-methionine = a ubiquinol + S-adenosyl-L-homocysteine + H(+)</text>
        <dbReference type="Rhea" id="RHEA:44380"/>
        <dbReference type="Rhea" id="RHEA-COMP:9566"/>
        <dbReference type="Rhea" id="RHEA-COMP:10914"/>
        <dbReference type="ChEBI" id="CHEBI:15378"/>
        <dbReference type="ChEBI" id="CHEBI:17976"/>
        <dbReference type="ChEBI" id="CHEBI:57856"/>
        <dbReference type="ChEBI" id="CHEBI:59789"/>
        <dbReference type="ChEBI" id="CHEBI:84422"/>
        <dbReference type="EC" id="2.1.1.64"/>
    </reaction>
</comment>
<comment type="catalytic activity">
    <reaction evidence="1">
        <text>a 3-(all-trans-polyprenyl)benzene-1,2-diol + S-adenosyl-L-methionine = a 2-methoxy-6-(all-trans-polyprenyl)phenol + S-adenosyl-L-homocysteine + H(+)</text>
        <dbReference type="Rhea" id="RHEA:31411"/>
        <dbReference type="Rhea" id="RHEA-COMP:9550"/>
        <dbReference type="Rhea" id="RHEA-COMP:9551"/>
        <dbReference type="ChEBI" id="CHEBI:15378"/>
        <dbReference type="ChEBI" id="CHEBI:57856"/>
        <dbReference type="ChEBI" id="CHEBI:59789"/>
        <dbReference type="ChEBI" id="CHEBI:62729"/>
        <dbReference type="ChEBI" id="CHEBI:62731"/>
        <dbReference type="EC" id="2.1.1.222"/>
    </reaction>
</comment>
<comment type="pathway">
    <text evidence="1">Cofactor biosynthesis; ubiquinone biosynthesis.</text>
</comment>
<comment type="similarity">
    <text evidence="1">Belongs to the methyltransferase superfamily. UbiG/COQ3 family.</text>
</comment>
<evidence type="ECO:0000255" key="1">
    <source>
        <dbReference type="HAMAP-Rule" id="MF_00472"/>
    </source>
</evidence>
<dbReference type="EC" id="2.1.1.222" evidence="1"/>
<dbReference type="EC" id="2.1.1.64" evidence="1"/>
<dbReference type="EMBL" id="CP000469">
    <property type="protein sequence ID" value="ABK48202.1"/>
    <property type="molecule type" value="Genomic_DNA"/>
</dbReference>
<dbReference type="RefSeq" id="WP_011716966.1">
    <property type="nucleotide sequence ID" value="NC_008577.1"/>
</dbReference>
<dbReference type="SMR" id="A0KWN3"/>
<dbReference type="STRING" id="94122.Shewana3_1971"/>
<dbReference type="KEGG" id="shn:Shewana3_1971"/>
<dbReference type="eggNOG" id="COG2227">
    <property type="taxonomic scope" value="Bacteria"/>
</dbReference>
<dbReference type="HOGENOM" id="CLU_042432_5_0_6"/>
<dbReference type="OrthoDB" id="9801538at2"/>
<dbReference type="UniPathway" id="UPA00232"/>
<dbReference type="Proteomes" id="UP000002589">
    <property type="component" value="Chromosome"/>
</dbReference>
<dbReference type="GO" id="GO:0102208">
    <property type="term" value="F:2-polyprenyl-6-hydroxyphenol methylase activity"/>
    <property type="evidence" value="ECO:0007669"/>
    <property type="project" value="UniProtKB-EC"/>
</dbReference>
<dbReference type="GO" id="GO:0061542">
    <property type="term" value="F:3-demethylubiquinol 3-O-methyltransferase activity"/>
    <property type="evidence" value="ECO:0007669"/>
    <property type="project" value="UniProtKB-UniRule"/>
</dbReference>
<dbReference type="GO" id="GO:0010420">
    <property type="term" value="F:polyprenyldihydroxybenzoate methyltransferase activity"/>
    <property type="evidence" value="ECO:0007669"/>
    <property type="project" value="InterPro"/>
</dbReference>
<dbReference type="GO" id="GO:0032259">
    <property type="term" value="P:methylation"/>
    <property type="evidence" value="ECO:0007669"/>
    <property type="project" value="UniProtKB-KW"/>
</dbReference>
<dbReference type="CDD" id="cd02440">
    <property type="entry name" value="AdoMet_MTases"/>
    <property type="match status" value="1"/>
</dbReference>
<dbReference type="FunFam" id="3.40.50.150:FF:000028">
    <property type="entry name" value="Ubiquinone biosynthesis O-methyltransferase"/>
    <property type="match status" value="1"/>
</dbReference>
<dbReference type="Gene3D" id="3.40.50.150">
    <property type="entry name" value="Vaccinia Virus protein VP39"/>
    <property type="match status" value="1"/>
</dbReference>
<dbReference type="HAMAP" id="MF_00472">
    <property type="entry name" value="UbiG"/>
    <property type="match status" value="1"/>
</dbReference>
<dbReference type="InterPro" id="IPR029063">
    <property type="entry name" value="SAM-dependent_MTases_sf"/>
</dbReference>
<dbReference type="InterPro" id="IPR010233">
    <property type="entry name" value="UbiG_MeTrfase"/>
</dbReference>
<dbReference type="NCBIfam" id="TIGR01983">
    <property type="entry name" value="UbiG"/>
    <property type="match status" value="1"/>
</dbReference>
<dbReference type="PANTHER" id="PTHR43464">
    <property type="entry name" value="METHYLTRANSFERASE"/>
    <property type="match status" value="1"/>
</dbReference>
<dbReference type="PANTHER" id="PTHR43464:SF19">
    <property type="entry name" value="UBIQUINONE BIOSYNTHESIS O-METHYLTRANSFERASE, MITOCHONDRIAL"/>
    <property type="match status" value="1"/>
</dbReference>
<dbReference type="Pfam" id="PF13489">
    <property type="entry name" value="Methyltransf_23"/>
    <property type="match status" value="1"/>
</dbReference>
<dbReference type="SUPFAM" id="SSF53335">
    <property type="entry name" value="S-adenosyl-L-methionine-dependent methyltransferases"/>
    <property type="match status" value="1"/>
</dbReference>
<reference key="1">
    <citation type="submission" date="2006-09" db="EMBL/GenBank/DDBJ databases">
        <title>Complete sequence of chromosome 1 of Shewanella sp. ANA-3.</title>
        <authorList>
            <person name="Copeland A."/>
            <person name="Lucas S."/>
            <person name="Lapidus A."/>
            <person name="Barry K."/>
            <person name="Detter J.C."/>
            <person name="Glavina del Rio T."/>
            <person name="Hammon N."/>
            <person name="Israni S."/>
            <person name="Dalin E."/>
            <person name="Tice H."/>
            <person name="Pitluck S."/>
            <person name="Chertkov O."/>
            <person name="Brettin T."/>
            <person name="Bruce D."/>
            <person name="Han C."/>
            <person name="Tapia R."/>
            <person name="Gilna P."/>
            <person name="Schmutz J."/>
            <person name="Larimer F."/>
            <person name="Land M."/>
            <person name="Hauser L."/>
            <person name="Kyrpides N."/>
            <person name="Kim E."/>
            <person name="Newman D."/>
            <person name="Salticov C."/>
            <person name="Konstantinidis K."/>
            <person name="Klappenback J."/>
            <person name="Tiedje J."/>
            <person name="Richardson P."/>
        </authorList>
    </citation>
    <scope>NUCLEOTIDE SEQUENCE [LARGE SCALE GENOMIC DNA]</scope>
    <source>
        <strain>ANA-3</strain>
    </source>
</reference>
<keyword id="KW-0489">Methyltransferase</keyword>
<keyword id="KW-0949">S-adenosyl-L-methionine</keyword>
<keyword id="KW-0808">Transferase</keyword>
<keyword id="KW-0831">Ubiquinone biosynthesis</keyword>
<name>UBIG_SHESA</name>
<feature type="chain" id="PRO_1000013924" description="Ubiquinone biosynthesis O-methyltransferase">
    <location>
        <begin position="1"/>
        <end position="236"/>
    </location>
</feature>
<feature type="binding site" evidence="1">
    <location>
        <position position="39"/>
    </location>
    <ligand>
        <name>S-adenosyl-L-methionine</name>
        <dbReference type="ChEBI" id="CHEBI:59789"/>
    </ligand>
</feature>
<feature type="binding site" evidence="1">
    <location>
        <position position="59"/>
    </location>
    <ligand>
        <name>S-adenosyl-L-methionine</name>
        <dbReference type="ChEBI" id="CHEBI:59789"/>
    </ligand>
</feature>
<feature type="binding site" evidence="1">
    <location>
        <position position="80"/>
    </location>
    <ligand>
        <name>S-adenosyl-L-methionine</name>
        <dbReference type="ChEBI" id="CHEBI:59789"/>
    </ligand>
</feature>
<feature type="binding site" evidence="1">
    <location>
        <position position="124"/>
    </location>
    <ligand>
        <name>S-adenosyl-L-methionine</name>
        <dbReference type="ChEBI" id="CHEBI:59789"/>
    </ligand>
</feature>
<sequence length="236" mass="26446">MQQNTNVDPLEIAKFERMAETWWDLNGEFKPLHLLNPLRLNYIDQTAGGIFGKKVLDVGCGGGILSESMARIGAIVHGLDMGEEPLEVARLHALETGVSINYVKNTAEAHREEHREYYDVVTCMEMLEHVPDPQSVIQACCDMVKPGGFVFFSTINRNIKSFVETIIGAEYLLKMLPIGTHDHNKFIKPSELMALVDNTDLLCKDALGITYNPLTGIFKYTPKVDVNYMIATQKVD</sequence>